<dbReference type="EC" id="3.1.-.-" evidence="1"/>
<dbReference type="EMBL" id="AP008231">
    <property type="protein sequence ID" value="BAD79897.1"/>
    <property type="molecule type" value="Genomic_DNA"/>
</dbReference>
<dbReference type="RefSeq" id="WP_011244017.1">
    <property type="nucleotide sequence ID" value="NC_006576.1"/>
</dbReference>
<dbReference type="SMR" id="Q5N1C3"/>
<dbReference type="KEGG" id="syc:syc1707_d"/>
<dbReference type="eggNOG" id="COG0816">
    <property type="taxonomic scope" value="Bacteria"/>
</dbReference>
<dbReference type="Proteomes" id="UP000001175">
    <property type="component" value="Chromosome"/>
</dbReference>
<dbReference type="GO" id="GO:0005829">
    <property type="term" value="C:cytosol"/>
    <property type="evidence" value="ECO:0007669"/>
    <property type="project" value="TreeGrafter"/>
</dbReference>
<dbReference type="GO" id="GO:0004518">
    <property type="term" value="F:nuclease activity"/>
    <property type="evidence" value="ECO:0007669"/>
    <property type="project" value="UniProtKB-KW"/>
</dbReference>
<dbReference type="GO" id="GO:0000967">
    <property type="term" value="P:rRNA 5'-end processing"/>
    <property type="evidence" value="ECO:0007669"/>
    <property type="project" value="UniProtKB-UniRule"/>
</dbReference>
<dbReference type="CDD" id="cd16964">
    <property type="entry name" value="YqgF"/>
    <property type="match status" value="1"/>
</dbReference>
<dbReference type="Gene3D" id="3.30.420.140">
    <property type="entry name" value="YqgF/RNase H-like domain"/>
    <property type="match status" value="1"/>
</dbReference>
<dbReference type="HAMAP" id="MF_00651">
    <property type="entry name" value="Nuclease_YqgF"/>
    <property type="match status" value="1"/>
</dbReference>
<dbReference type="InterPro" id="IPR012337">
    <property type="entry name" value="RNaseH-like_sf"/>
</dbReference>
<dbReference type="InterPro" id="IPR005227">
    <property type="entry name" value="YqgF"/>
</dbReference>
<dbReference type="InterPro" id="IPR006641">
    <property type="entry name" value="YqgF/RNaseH-like_dom"/>
</dbReference>
<dbReference type="InterPro" id="IPR037027">
    <property type="entry name" value="YqgF/RNaseH-like_dom_sf"/>
</dbReference>
<dbReference type="NCBIfam" id="TIGR00250">
    <property type="entry name" value="RNAse_H_YqgF"/>
    <property type="match status" value="1"/>
</dbReference>
<dbReference type="PANTHER" id="PTHR33317">
    <property type="entry name" value="POLYNUCLEOTIDYL TRANSFERASE, RIBONUCLEASE H-LIKE SUPERFAMILY PROTEIN"/>
    <property type="match status" value="1"/>
</dbReference>
<dbReference type="PANTHER" id="PTHR33317:SF4">
    <property type="entry name" value="POLYNUCLEOTIDYL TRANSFERASE, RIBONUCLEASE H-LIKE SUPERFAMILY PROTEIN"/>
    <property type="match status" value="1"/>
</dbReference>
<dbReference type="Pfam" id="PF03652">
    <property type="entry name" value="RuvX"/>
    <property type="match status" value="1"/>
</dbReference>
<dbReference type="SMART" id="SM00732">
    <property type="entry name" value="YqgFc"/>
    <property type="match status" value="1"/>
</dbReference>
<dbReference type="SUPFAM" id="SSF53098">
    <property type="entry name" value="Ribonuclease H-like"/>
    <property type="match status" value="1"/>
</dbReference>
<comment type="function">
    <text evidence="1">Could be a nuclease involved in processing of the 5'-end of pre-16S rRNA.</text>
</comment>
<comment type="subcellular location">
    <subcellularLocation>
        <location evidence="1">Cytoplasm</location>
    </subcellularLocation>
</comment>
<comment type="similarity">
    <text evidence="1">Belongs to the YqgF nuclease family.</text>
</comment>
<keyword id="KW-0963">Cytoplasm</keyword>
<keyword id="KW-0378">Hydrolase</keyword>
<keyword id="KW-0540">Nuclease</keyword>
<keyword id="KW-0690">Ribosome biogenesis</keyword>
<sequence>MPYYAALGLDVGRRRIGVAGCDRLGITVQGLTTIVRRDFASDVAAISAIAKERQVELLVIGLPYSMDGSLGSQAKQTQRFATRLSKALQLPITYVDERLTSFEAEEMIKAVGRSPSRDKGAIDRKAAALILQQWLDEQREPRRFGSTQH</sequence>
<reference key="1">
    <citation type="journal article" date="2007" name="Photosyn. Res.">
        <title>Complete nucleotide sequence of the freshwater unicellular cyanobacterium Synechococcus elongatus PCC 6301 chromosome: gene content and organization.</title>
        <authorList>
            <person name="Sugita C."/>
            <person name="Ogata K."/>
            <person name="Shikata M."/>
            <person name="Jikuya H."/>
            <person name="Takano J."/>
            <person name="Furumichi M."/>
            <person name="Kanehisa M."/>
            <person name="Omata T."/>
            <person name="Sugiura M."/>
            <person name="Sugita M."/>
        </authorList>
    </citation>
    <scope>NUCLEOTIDE SEQUENCE [LARGE SCALE GENOMIC DNA]</scope>
    <source>
        <strain>ATCC 27144 / PCC 6301 / SAUG 1402/1</strain>
    </source>
</reference>
<name>YQGF_SYNP6</name>
<proteinExistence type="inferred from homology"/>
<feature type="chain" id="PRO_0000172159" description="Putative pre-16S rRNA nuclease">
    <location>
        <begin position="1"/>
        <end position="149"/>
    </location>
</feature>
<organism>
    <name type="scientific">Synechococcus sp. (strain ATCC 27144 / PCC 6301 / SAUG 1402/1)</name>
    <name type="common">Anacystis nidulans</name>
    <dbReference type="NCBI Taxonomy" id="269084"/>
    <lineage>
        <taxon>Bacteria</taxon>
        <taxon>Bacillati</taxon>
        <taxon>Cyanobacteriota</taxon>
        <taxon>Cyanophyceae</taxon>
        <taxon>Synechococcales</taxon>
        <taxon>Synechococcaceae</taxon>
        <taxon>Synechococcus</taxon>
    </lineage>
</organism>
<gene>
    <name type="ordered locus">syc1707_d</name>
</gene>
<accession>Q5N1C3</accession>
<protein>
    <recommendedName>
        <fullName evidence="1">Putative pre-16S rRNA nuclease</fullName>
        <ecNumber evidence="1">3.1.-.-</ecNumber>
    </recommendedName>
</protein>
<evidence type="ECO:0000255" key="1">
    <source>
        <dbReference type="HAMAP-Rule" id="MF_00651"/>
    </source>
</evidence>